<gene>
    <name evidence="1" type="primary">aat</name>
    <name type="ordered locus">azo2208</name>
</gene>
<organism>
    <name type="scientific">Azoarcus sp. (strain BH72)</name>
    <dbReference type="NCBI Taxonomy" id="418699"/>
    <lineage>
        <taxon>Bacteria</taxon>
        <taxon>Pseudomonadati</taxon>
        <taxon>Pseudomonadota</taxon>
        <taxon>Betaproteobacteria</taxon>
        <taxon>Rhodocyclales</taxon>
        <taxon>Zoogloeaceae</taxon>
        <taxon>Azoarcus</taxon>
    </lineage>
</organism>
<proteinExistence type="inferred from homology"/>
<feature type="chain" id="PRO_0000304325" description="Leucyl/phenylalanyl-tRNA--protein transferase">
    <location>
        <begin position="1"/>
        <end position="235"/>
    </location>
</feature>
<name>LFTR_AZOSB</name>
<keyword id="KW-0012">Acyltransferase</keyword>
<keyword id="KW-0963">Cytoplasm</keyword>
<keyword id="KW-1185">Reference proteome</keyword>
<keyword id="KW-0808">Transferase</keyword>
<protein>
    <recommendedName>
        <fullName evidence="1">Leucyl/phenylalanyl-tRNA--protein transferase</fullName>
        <ecNumber evidence="1">2.3.2.6</ecNumber>
    </recommendedName>
    <alternativeName>
        <fullName evidence="1">L/F-transferase</fullName>
    </alternativeName>
    <alternativeName>
        <fullName evidence="1">Leucyltransferase</fullName>
    </alternativeName>
    <alternativeName>
        <fullName evidence="1">Phenyalanyltransferase</fullName>
    </alternativeName>
</protein>
<reference key="1">
    <citation type="journal article" date="2006" name="Nat. Biotechnol.">
        <title>Complete genome of the mutualistic, N2-fixing grass endophyte Azoarcus sp. strain BH72.</title>
        <authorList>
            <person name="Krause A."/>
            <person name="Ramakumar A."/>
            <person name="Bartels D."/>
            <person name="Battistoni F."/>
            <person name="Bekel T."/>
            <person name="Boch J."/>
            <person name="Boehm M."/>
            <person name="Friedrich F."/>
            <person name="Hurek T."/>
            <person name="Krause L."/>
            <person name="Linke B."/>
            <person name="McHardy A.C."/>
            <person name="Sarkar A."/>
            <person name="Schneiker S."/>
            <person name="Syed A.A."/>
            <person name="Thauer R."/>
            <person name="Vorhoelter F.-J."/>
            <person name="Weidner S."/>
            <person name="Puehler A."/>
            <person name="Reinhold-Hurek B."/>
            <person name="Kaiser O."/>
            <person name="Goesmann A."/>
        </authorList>
    </citation>
    <scope>NUCLEOTIDE SEQUENCE [LARGE SCALE GENOMIC DNA]</scope>
    <source>
        <strain>BH72</strain>
    </source>
</reference>
<comment type="function">
    <text evidence="1">Functions in the N-end rule pathway of protein degradation where it conjugates Leu, Phe and, less efficiently, Met from aminoacyl-tRNAs to the N-termini of proteins containing an N-terminal arginine or lysine.</text>
</comment>
<comment type="catalytic activity">
    <reaction evidence="1">
        <text>N-terminal L-lysyl-[protein] + L-leucyl-tRNA(Leu) = N-terminal L-leucyl-L-lysyl-[protein] + tRNA(Leu) + H(+)</text>
        <dbReference type="Rhea" id="RHEA:12340"/>
        <dbReference type="Rhea" id="RHEA-COMP:9613"/>
        <dbReference type="Rhea" id="RHEA-COMP:9622"/>
        <dbReference type="Rhea" id="RHEA-COMP:12670"/>
        <dbReference type="Rhea" id="RHEA-COMP:12671"/>
        <dbReference type="ChEBI" id="CHEBI:15378"/>
        <dbReference type="ChEBI" id="CHEBI:65249"/>
        <dbReference type="ChEBI" id="CHEBI:78442"/>
        <dbReference type="ChEBI" id="CHEBI:78494"/>
        <dbReference type="ChEBI" id="CHEBI:133043"/>
        <dbReference type="EC" id="2.3.2.6"/>
    </reaction>
</comment>
<comment type="catalytic activity">
    <reaction evidence="1">
        <text>N-terminal L-arginyl-[protein] + L-leucyl-tRNA(Leu) = N-terminal L-leucyl-L-arginyl-[protein] + tRNA(Leu) + H(+)</text>
        <dbReference type="Rhea" id="RHEA:50416"/>
        <dbReference type="Rhea" id="RHEA-COMP:9613"/>
        <dbReference type="Rhea" id="RHEA-COMP:9622"/>
        <dbReference type="Rhea" id="RHEA-COMP:12672"/>
        <dbReference type="Rhea" id="RHEA-COMP:12673"/>
        <dbReference type="ChEBI" id="CHEBI:15378"/>
        <dbReference type="ChEBI" id="CHEBI:64719"/>
        <dbReference type="ChEBI" id="CHEBI:78442"/>
        <dbReference type="ChEBI" id="CHEBI:78494"/>
        <dbReference type="ChEBI" id="CHEBI:133044"/>
        <dbReference type="EC" id="2.3.2.6"/>
    </reaction>
</comment>
<comment type="catalytic activity">
    <reaction evidence="1">
        <text>L-phenylalanyl-tRNA(Phe) + an N-terminal L-alpha-aminoacyl-[protein] = an N-terminal L-phenylalanyl-L-alpha-aminoacyl-[protein] + tRNA(Phe)</text>
        <dbReference type="Rhea" id="RHEA:43632"/>
        <dbReference type="Rhea" id="RHEA-COMP:9668"/>
        <dbReference type="Rhea" id="RHEA-COMP:9699"/>
        <dbReference type="Rhea" id="RHEA-COMP:10636"/>
        <dbReference type="Rhea" id="RHEA-COMP:10637"/>
        <dbReference type="ChEBI" id="CHEBI:78442"/>
        <dbReference type="ChEBI" id="CHEBI:78531"/>
        <dbReference type="ChEBI" id="CHEBI:78597"/>
        <dbReference type="ChEBI" id="CHEBI:83561"/>
        <dbReference type="EC" id="2.3.2.6"/>
    </reaction>
</comment>
<comment type="subcellular location">
    <subcellularLocation>
        <location evidence="1">Cytoplasm</location>
    </subcellularLocation>
</comment>
<comment type="similarity">
    <text evidence="1">Belongs to the L/F-transferase family.</text>
</comment>
<sequence>MIPWLTDRPAFPPVERALTEPNGLLAAGGRLTPEWLLAAYRRGIFPWYSDGEPILWWSPDPRLVLQPAQIRITRSLRKVLRGRRFEVRFDTAFARVIEECAAPREPGGGTWITPEIRAAYLRMHELGYAHSVESWLDGRLVGGLYGMALGRAFFGESMFSRVSDASKVALAHLARFLEQRDFGVIDCQMTTPHLLSMGAHEIARREFCAGLERWTVEGPPPAKWSGTTAAEFDWN</sequence>
<accession>A1K7M0</accession>
<evidence type="ECO:0000255" key="1">
    <source>
        <dbReference type="HAMAP-Rule" id="MF_00688"/>
    </source>
</evidence>
<dbReference type="EC" id="2.3.2.6" evidence="1"/>
<dbReference type="EMBL" id="AM406670">
    <property type="protein sequence ID" value="CAL94825.1"/>
    <property type="molecule type" value="Genomic_DNA"/>
</dbReference>
<dbReference type="RefSeq" id="WP_011765939.1">
    <property type="nucleotide sequence ID" value="NC_008702.1"/>
</dbReference>
<dbReference type="SMR" id="A1K7M0"/>
<dbReference type="STRING" id="62928.azo2208"/>
<dbReference type="KEGG" id="azo:azo2208"/>
<dbReference type="eggNOG" id="COG2360">
    <property type="taxonomic scope" value="Bacteria"/>
</dbReference>
<dbReference type="HOGENOM" id="CLU_075045_0_0_4"/>
<dbReference type="Proteomes" id="UP000002588">
    <property type="component" value="Chromosome"/>
</dbReference>
<dbReference type="GO" id="GO:0005737">
    <property type="term" value="C:cytoplasm"/>
    <property type="evidence" value="ECO:0007669"/>
    <property type="project" value="UniProtKB-SubCell"/>
</dbReference>
<dbReference type="GO" id="GO:0008914">
    <property type="term" value="F:leucyl-tRNA--protein transferase activity"/>
    <property type="evidence" value="ECO:0007669"/>
    <property type="project" value="UniProtKB-UniRule"/>
</dbReference>
<dbReference type="GO" id="GO:0030163">
    <property type="term" value="P:protein catabolic process"/>
    <property type="evidence" value="ECO:0007669"/>
    <property type="project" value="UniProtKB-UniRule"/>
</dbReference>
<dbReference type="FunFam" id="3.30.70.3550:FF:000001">
    <property type="entry name" value="Leucyl/phenylalanyl-tRNA--protein transferase"/>
    <property type="match status" value="1"/>
</dbReference>
<dbReference type="FunFam" id="3.40.630.70:FF:000001">
    <property type="entry name" value="Leucyl/phenylalanyl-tRNA--protein transferase"/>
    <property type="match status" value="1"/>
</dbReference>
<dbReference type="Gene3D" id="3.40.630.70">
    <property type="entry name" value="Leucyl/phenylalanyl-tRNA-protein transferase, C-terminal domain"/>
    <property type="match status" value="1"/>
</dbReference>
<dbReference type="Gene3D" id="3.30.70.3550">
    <property type="entry name" value="Leucyl/phenylalanyl-tRNA-protein transferase, N-terminal domain"/>
    <property type="match status" value="1"/>
</dbReference>
<dbReference type="HAMAP" id="MF_00688">
    <property type="entry name" value="Leu_Phe_trans"/>
    <property type="match status" value="1"/>
</dbReference>
<dbReference type="InterPro" id="IPR016181">
    <property type="entry name" value="Acyl_CoA_acyltransferase"/>
</dbReference>
<dbReference type="InterPro" id="IPR004616">
    <property type="entry name" value="Leu/Phe-tRNA_Trfase"/>
</dbReference>
<dbReference type="InterPro" id="IPR042203">
    <property type="entry name" value="Leu/Phe-tRNA_Trfase_C"/>
</dbReference>
<dbReference type="InterPro" id="IPR042221">
    <property type="entry name" value="Leu/Phe-tRNA_Trfase_N"/>
</dbReference>
<dbReference type="NCBIfam" id="TIGR00667">
    <property type="entry name" value="aat"/>
    <property type="match status" value="1"/>
</dbReference>
<dbReference type="PANTHER" id="PTHR30098">
    <property type="entry name" value="LEUCYL/PHENYLALANYL-TRNA--PROTEIN TRANSFERASE"/>
    <property type="match status" value="1"/>
</dbReference>
<dbReference type="PANTHER" id="PTHR30098:SF2">
    <property type="entry name" value="LEUCYL_PHENYLALANYL-TRNA--PROTEIN TRANSFERASE"/>
    <property type="match status" value="1"/>
</dbReference>
<dbReference type="Pfam" id="PF03588">
    <property type="entry name" value="Leu_Phe_trans"/>
    <property type="match status" value="1"/>
</dbReference>
<dbReference type="SUPFAM" id="SSF55729">
    <property type="entry name" value="Acyl-CoA N-acyltransferases (Nat)"/>
    <property type="match status" value="1"/>
</dbReference>